<comment type="function">
    <text evidence="1">Regulator of microtubule dynamics.</text>
</comment>
<comment type="similarity">
    <text evidence="3">Belongs to the TPPP family.</text>
</comment>
<evidence type="ECO:0000250" key="1">
    <source>
        <dbReference type="UniProtKB" id="O94811"/>
    </source>
</evidence>
<evidence type="ECO:0000256" key="2">
    <source>
        <dbReference type="SAM" id="MobiDB-lite"/>
    </source>
</evidence>
<evidence type="ECO:0000305" key="3"/>
<evidence type="ECO:0000312" key="4">
    <source>
        <dbReference type="WormBase" id="C32E8.3"/>
    </source>
</evidence>
<evidence type="ECO:0007829" key="5">
    <source>
        <dbReference type="PDB" id="1PUL"/>
    </source>
</evidence>
<sequence length="180" mass="19406">MAAAAGFNWDDADVKKRWDAFTKFGAATATEMTGKNFDKWLKDAGVLDNKAITGTMTGIAFSKVTGPKKKATFDETKKVLAFVAEDRARQSKKPIQDELDAITEKLAKLEAPSVGGAAKANAAGVYSRLTDHTKYTGAHKERFDAEGKGKGKSGRADTTENTGYVGAYKNKDSYDKTHGK</sequence>
<dbReference type="EMBL" id="FO080749">
    <property type="protein sequence ID" value="CCD66401.1"/>
    <property type="molecule type" value="Genomic_DNA"/>
</dbReference>
<dbReference type="PIR" id="T25598">
    <property type="entry name" value="T25598"/>
</dbReference>
<dbReference type="RefSeq" id="NP_491219.1">
    <property type="nucleotide sequence ID" value="NM_058818.4"/>
</dbReference>
<dbReference type="PDB" id="1PUL">
    <property type="method" value="NMR"/>
    <property type="chains" value="A=1-115"/>
</dbReference>
<dbReference type="PDBsum" id="1PUL"/>
<dbReference type="BMRB" id="P91127"/>
<dbReference type="SMR" id="P91127"/>
<dbReference type="BioGRID" id="37422">
    <property type="interactions" value="4"/>
</dbReference>
<dbReference type="FunCoup" id="P91127">
    <property type="interactions" value="96"/>
</dbReference>
<dbReference type="STRING" id="6239.C32E8.3.1"/>
<dbReference type="PaxDb" id="6239-C32E8.3"/>
<dbReference type="PeptideAtlas" id="P91127"/>
<dbReference type="EnsemblMetazoa" id="C32E8.3.1">
    <property type="protein sequence ID" value="C32E8.3.1"/>
    <property type="gene ID" value="WBGene00016321"/>
</dbReference>
<dbReference type="GeneID" id="171948"/>
<dbReference type="KEGG" id="cel:CELE_C32E8.3"/>
<dbReference type="UCSC" id="C32E8.3">
    <property type="organism name" value="c. elegans"/>
</dbReference>
<dbReference type="AGR" id="WB:WBGene00016321"/>
<dbReference type="CTD" id="171948"/>
<dbReference type="WormBase" id="C32E8.3">
    <property type="protein sequence ID" value="CE08527"/>
    <property type="gene ID" value="WBGene00016321"/>
    <property type="gene designation" value="tppp-1"/>
</dbReference>
<dbReference type="eggNOG" id="KOG4070">
    <property type="taxonomic scope" value="Eukaryota"/>
</dbReference>
<dbReference type="GeneTree" id="ENSGT00940000153875"/>
<dbReference type="HOGENOM" id="CLU_091734_0_0_1"/>
<dbReference type="InParanoid" id="P91127"/>
<dbReference type="OMA" id="KELGQMR"/>
<dbReference type="OrthoDB" id="548799at2759"/>
<dbReference type="PhylomeDB" id="P91127"/>
<dbReference type="EvolutionaryTrace" id="P91127"/>
<dbReference type="PRO" id="PR:P91127"/>
<dbReference type="Proteomes" id="UP000001940">
    <property type="component" value="Chromosome I"/>
</dbReference>
<dbReference type="Bgee" id="WBGene00016321">
    <property type="expression patterns" value="Expressed in pharyngeal muscle cell (C elegans) and 4 other cell types or tissues"/>
</dbReference>
<dbReference type="GO" id="GO:0015631">
    <property type="term" value="F:tubulin binding"/>
    <property type="evidence" value="ECO:0000318"/>
    <property type="project" value="GO_Central"/>
</dbReference>
<dbReference type="GO" id="GO:0001578">
    <property type="term" value="P:microtubule bundle formation"/>
    <property type="evidence" value="ECO:0000318"/>
    <property type="project" value="GO_Central"/>
</dbReference>
<dbReference type="GO" id="GO:0046785">
    <property type="term" value="P:microtubule polymerization"/>
    <property type="evidence" value="ECO:0000318"/>
    <property type="project" value="GO_Central"/>
</dbReference>
<dbReference type="GO" id="GO:0032273">
    <property type="term" value="P:positive regulation of protein polymerization"/>
    <property type="evidence" value="ECO:0000318"/>
    <property type="project" value="GO_Central"/>
</dbReference>
<dbReference type="FunFam" id="1.10.238.10:FF:000266">
    <property type="entry name" value="TPPP family protein"/>
    <property type="match status" value="1"/>
</dbReference>
<dbReference type="Gene3D" id="1.10.238.10">
    <property type="entry name" value="EF-hand"/>
    <property type="match status" value="1"/>
</dbReference>
<dbReference type="InterPro" id="IPR011992">
    <property type="entry name" value="EF-hand-dom_pair"/>
</dbReference>
<dbReference type="InterPro" id="IPR008907">
    <property type="entry name" value="TPP/p25"/>
</dbReference>
<dbReference type="PANTHER" id="PTHR12932">
    <property type="entry name" value="P25 ALPHA-RELATED"/>
    <property type="match status" value="1"/>
</dbReference>
<dbReference type="PANTHER" id="PTHR12932:SF9">
    <property type="entry name" value="TUBULIN POLYMERIZATION-PROMOTING PROTEIN HOMOLOG"/>
    <property type="match status" value="1"/>
</dbReference>
<dbReference type="Pfam" id="PF05517">
    <property type="entry name" value="p25-alpha"/>
    <property type="match status" value="1"/>
</dbReference>
<dbReference type="SUPFAM" id="SSF47473">
    <property type="entry name" value="EF-hand"/>
    <property type="match status" value="1"/>
</dbReference>
<organism>
    <name type="scientific">Caenorhabditis elegans</name>
    <dbReference type="NCBI Taxonomy" id="6239"/>
    <lineage>
        <taxon>Eukaryota</taxon>
        <taxon>Metazoa</taxon>
        <taxon>Ecdysozoa</taxon>
        <taxon>Nematoda</taxon>
        <taxon>Chromadorea</taxon>
        <taxon>Rhabditida</taxon>
        <taxon>Rhabditina</taxon>
        <taxon>Rhabditomorpha</taxon>
        <taxon>Rhabditoidea</taxon>
        <taxon>Rhabditidae</taxon>
        <taxon>Peloderinae</taxon>
        <taxon>Caenorhabditis</taxon>
    </lineage>
</organism>
<keyword id="KW-0002">3D-structure</keyword>
<keyword id="KW-1185">Reference proteome</keyword>
<name>TPPP_CAEEL</name>
<accession>P91127</accession>
<feature type="chain" id="PRO_0000221140" description="Tubulin polymerization-promoting protein homolog" evidence="3">
    <location>
        <begin position="1"/>
        <end position="180"/>
    </location>
</feature>
<feature type="region of interest" description="Disordered" evidence="2">
    <location>
        <begin position="136"/>
        <end position="180"/>
    </location>
</feature>
<feature type="compositionally biased region" description="Basic and acidic residues" evidence="2">
    <location>
        <begin position="136"/>
        <end position="158"/>
    </location>
</feature>
<feature type="compositionally biased region" description="Basic and acidic residues" evidence="2">
    <location>
        <begin position="169"/>
        <end position="180"/>
    </location>
</feature>
<feature type="helix" evidence="5">
    <location>
        <begin position="11"/>
        <end position="24"/>
    </location>
</feature>
<feature type="strand" evidence="5">
    <location>
        <begin position="27"/>
        <end position="30"/>
    </location>
</feature>
<feature type="helix" evidence="5">
    <location>
        <begin position="34"/>
        <end position="44"/>
    </location>
</feature>
<feature type="strand" evidence="5">
    <location>
        <begin position="49"/>
        <end position="52"/>
    </location>
</feature>
<feature type="helix" evidence="5">
    <location>
        <begin position="54"/>
        <end position="64"/>
    </location>
</feature>
<feature type="strand" evidence="5">
    <location>
        <begin position="67"/>
        <end position="69"/>
    </location>
</feature>
<feature type="helix" evidence="5">
    <location>
        <begin position="73"/>
        <end position="91"/>
    </location>
</feature>
<feature type="helix" evidence="5">
    <location>
        <begin position="95"/>
        <end position="108"/>
    </location>
</feature>
<reference key="1">
    <citation type="journal article" date="1998" name="Science">
        <title>Genome sequence of the nematode C. elegans: a platform for investigating biology.</title>
        <authorList>
            <consortium name="The C. elegans sequencing consortium"/>
        </authorList>
    </citation>
    <scope>NUCLEOTIDE SEQUENCE [LARGE SCALE GENOMIC DNA]</scope>
    <source>
        <strain>Bristol N2</strain>
    </source>
</reference>
<reference key="2">
    <citation type="journal article" date="2004" name="J. Biomol. NMR">
        <title>Backbone 1H, 15N and 13C assignments for the 21 kDa Caenorhabditis elegans homologue of 'brain-specific' protein.</title>
        <authorList>
            <person name="Monleon D."/>
            <person name="Chiang Y."/>
            <person name="Aramini J.M."/>
            <person name="Swapna G.V."/>
            <person name="Macapagal D."/>
            <person name="Gunsalus K.C."/>
            <person name="Kim S."/>
            <person name="Szyperski T."/>
            <person name="Montelione G.T."/>
        </authorList>
    </citation>
    <scope>STRUCTURE BY NMR OF 1-115</scope>
</reference>
<protein>
    <recommendedName>
        <fullName evidence="4">Tubulin polymerization-promoting protein homolog</fullName>
    </recommendedName>
</protein>
<gene>
    <name evidence="4" type="primary">tppp-1</name>
    <name evidence="4" type="ORF">C32E8.3</name>
</gene>
<proteinExistence type="evidence at protein level"/>